<dbReference type="EC" id="1.97.1.12" evidence="2"/>
<dbReference type="EMBL" id="CP000393">
    <property type="protein sequence ID" value="ABG49913.1"/>
    <property type="molecule type" value="Genomic_DNA"/>
</dbReference>
<dbReference type="RefSeq" id="WP_006616272.1">
    <property type="nucleotide sequence ID" value="NC_008312.1"/>
</dbReference>
<dbReference type="SMR" id="Q119B1"/>
<dbReference type="STRING" id="203124.Tery_0454"/>
<dbReference type="KEGG" id="ter:Tery_0454"/>
<dbReference type="eggNOG" id="COG1143">
    <property type="taxonomic scope" value="Bacteria"/>
</dbReference>
<dbReference type="HOGENOM" id="CLU_139698_8_0_3"/>
<dbReference type="OrthoDB" id="9804603at2"/>
<dbReference type="GO" id="GO:0009522">
    <property type="term" value="C:photosystem I"/>
    <property type="evidence" value="ECO:0007669"/>
    <property type="project" value="UniProtKB-KW"/>
</dbReference>
<dbReference type="GO" id="GO:0031676">
    <property type="term" value="C:plasma membrane-derived thylakoid membrane"/>
    <property type="evidence" value="ECO:0007669"/>
    <property type="project" value="UniProtKB-SubCell"/>
</dbReference>
<dbReference type="GO" id="GO:0051539">
    <property type="term" value="F:4 iron, 4 sulfur cluster binding"/>
    <property type="evidence" value="ECO:0007669"/>
    <property type="project" value="UniProtKB-KW"/>
</dbReference>
<dbReference type="GO" id="GO:0009055">
    <property type="term" value="F:electron transfer activity"/>
    <property type="evidence" value="ECO:0007669"/>
    <property type="project" value="UniProtKB-UniRule"/>
</dbReference>
<dbReference type="GO" id="GO:0046872">
    <property type="term" value="F:metal ion binding"/>
    <property type="evidence" value="ECO:0007669"/>
    <property type="project" value="UniProtKB-KW"/>
</dbReference>
<dbReference type="GO" id="GO:0016491">
    <property type="term" value="F:oxidoreductase activity"/>
    <property type="evidence" value="ECO:0007669"/>
    <property type="project" value="UniProtKB-KW"/>
</dbReference>
<dbReference type="GO" id="GO:0009773">
    <property type="term" value="P:photosynthetic electron transport in photosystem I"/>
    <property type="evidence" value="ECO:0007669"/>
    <property type="project" value="InterPro"/>
</dbReference>
<dbReference type="FunFam" id="3.30.70.20:FF:000001">
    <property type="entry name" value="Photosystem I iron-sulfur center"/>
    <property type="match status" value="1"/>
</dbReference>
<dbReference type="Gene3D" id="3.30.70.20">
    <property type="match status" value="1"/>
</dbReference>
<dbReference type="HAMAP" id="MF_01303">
    <property type="entry name" value="PSI_PsaC"/>
    <property type="match status" value="1"/>
</dbReference>
<dbReference type="InterPro" id="IPR017896">
    <property type="entry name" value="4Fe4S_Fe-S-bd"/>
</dbReference>
<dbReference type="InterPro" id="IPR017900">
    <property type="entry name" value="4Fe4S_Fe_S_CS"/>
</dbReference>
<dbReference type="InterPro" id="IPR050157">
    <property type="entry name" value="PSI_iron-sulfur_center"/>
</dbReference>
<dbReference type="InterPro" id="IPR017491">
    <property type="entry name" value="PSI_PsaC"/>
</dbReference>
<dbReference type="NCBIfam" id="TIGR03048">
    <property type="entry name" value="PS_I_psaC"/>
    <property type="match status" value="1"/>
</dbReference>
<dbReference type="PANTHER" id="PTHR24960:SF79">
    <property type="entry name" value="PHOTOSYSTEM I IRON-SULFUR CENTER"/>
    <property type="match status" value="1"/>
</dbReference>
<dbReference type="PANTHER" id="PTHR24960">
    <property type="entry name" value="PHOTOSYSTEM I IRON-SULFUR CENTER-RELATED"/>
    <property type="match status" value="1"/>
</dbReference>
<dbReference type="Pfam" id="PF12838">
    <property type="entry name" value="Fer4_7"/>
    <property type="match status" value="1"/>
</dbReference>
<dbReference type="SUPFAM" id="SSF54862">
    <property type="entry name" value="4Fe-4S ferredoxins"/>
    <property type="match status" value="1"/>
</dbReference>
<dbReference type="PROSITE" id="PS00198">
    <property type="entry name" value="4FE4S_FER_1"/>
    <property type="match status" value="2"/>
</dbReference>
<dbReference type="PROSITE" id="PS51379">
    <property type="entry name" value="4FE4S_FER_2"/>
    <property type="match status" value="2"/>
</dbReference>
<sequence>MSHSVKIYDTCIGCTQCVRACPLDVLEMVPWDGCKAGQIASSPRTEDCIGCKRCETACPTDFLSVRVYLGAETTRSMGLAY</sequence>
<name>PSAC_TRIEI</name>
<protein>
    <recommendedName>
        <fullName evidence="2">Photosystem I iron-sulfur center</fullName>
        <ecNumber evidence="2">1.97.1.12</ecNumber>
    </recommendedName>
    <alternativeName>
        <fullName evidence="2">9 kDa polypeptide</fullName>
    </alternativeName>
    <alternativeName>
        <fullName evidence="2">PSI-C</fullName>
    </alternativeName>
    <alternativeName>
        <fullName evidence="2">Photosystem I subunit VII</fullName>
    </alternativeName>
    <alternativeName>
        <fullName evidence="2">PsaC</fullName>
    </alternativeName>
</protein>
<keyword id="KW-0004">4Fe-4S</keyword>
<keyword id="KW-0249">Electron transport</keyword>
<keyword id="KW-0408">Iron</keyword>
<keyword id="KW-0411">Iron-sulfur</keyword>
<keyword id="KW-0472">Membrane</keyword>
<keyword id="KW-0479">Metal-binding</keyword>
<keyword id="KW-0560">Oxidoreductase</keyword>
<keyword id="KW-0602">Photosynthesis</keyword>
<keyword id="KW-0603">Photosystem I</keyword>
<keyword id="KW-0677">Repeat</keyword>
<keyword id="KW-0793">Thylakoid</keyword>
<keyword id="KW-0813">Transport</keyword>
<reference key="1">
    <citation type="journal article" date="2015" name="Proc. Natl. Acad. Sci. U.S.A.">
        <title>Trichodesmium genome maintains abundant, widespread noncoding DNA in situ, despite oligotrophic lifestyle.</title>
        <authorList>
            <person name="Walworth N."/>
            <person name="Pfreundt U."/>
            <person name="Nelson W.C."/>
            <person name="Mincer T."/>
            <person name="Heidelberg J.F."/>
            <person name="Fu F."/>
            <person name="Waterbury J.B."/>
            <person name="Glavina del Rio T."/>
            <person name="Goodwin L."/>
            <person name="Kyrpides N.C."/>
            <person name="Land M.L."/>
            <person name="Woyke T."/>
            <person name="Hutchins D.A."/>
            <person name="Hess W.R."/>
            <person name="Webb E.A."/>
        </authorList>
    </citation>
    <scope>NUCLEOTIDE SEQUENCE [LARGE SCALE GENOMIC DNA]</scope>
    <source>
        <strain>IMS101</strain>
    </source>
</reference>
<feature type="initiator methionine" description="Removed" evidence="1">
    <location>
        <position position="1"/>
    </location>
</feature>
<feature type="chain" id="PRO_0000292108" description="Photosystem I iron-sulfur center">
    <location>
        <begin position="2"/>
        <end position="81"/>
    </location>
</feature>
<feature type="domain" description="4Fe-4S ferredoxin-type 1" evidence="2">
    <location>
        <begin position="2"/>
        <end position="31"/>
    </location>
</feature>
<feature type="domain" description="4Fe-4S ferredoxin-type 2" evidence="2">
    <location>
        <begin position="37"/>
        <end position="68"/>
    </location>
</feature>
<feature type="binding site" evidence="2">
    <location>
        <position position="11"/>
    </location>
    <ligand>
        <name>[4Fe-4S] cluster</name>
        <dbReference type="ChEBI" id="CHEBI:49883"/>
        <label>1</label>
    </ligand>
</feature>
<feature type="binding site" evidence="2">
    <location>
        <position position="14"/>
    </location>
    <ligand>
        <name>[4Fe-4S] cluster</name>
        <dbReference type="ChEBI" id="CHEBI:49883"/>
        <label>1</label>
    </ligand>
</feature>
<feature type="binding site" evidence="2">
    <location>
        <position position="17"/>
    </location>
    <ligand>
        <name>[4Fe-4S] cluster</name>
        <dbReference type="ChEBI" id="CHEBI:49883"/>
        <label>1</label>
    </ligand>
</feature>
<feature type="binding site" evidence="2">
    <location>
        <position position="21"/>
    </location>
    <ligand>
        <name>[4Fe-4S] cluster</name>
        <dbReference type="ChEBI" id="CHEBI:49883"/>
        <label>2</label>
    </ligand>
</feature>
<feature type="binding site" evidence="2">
    <location>
        <position position="48"/>
    </location>
    <ligand>
        <name>[4Fe-4S] cluster</name>
        <dbReference type="ChEBI" id="CHEBI:49883"/>
        <label>2</label>
    </ligand>
</feature>
<feature type="binding site" evidence="2">
    <location>
        <position position="51"/>
    </location>
    <ligand>
        <name>[4Fe-4S] cluster</name>
        <dbReference type="ChEBI" id="CHEBI:49883"/>
        <label>2</label>
    </ligand>
</feature>
<feature type="binding site" evidence="2">
    <location>
        <position position="54"/>
    </location>
    <ligand>
        <name>[4Fe-4S] cluster</name>
        <dbReference type="ChEBI" id="CHEBI:49883"/>
        <label>2</label>
    </ligand>
</feature>
<feature type="binding site" evidence="2">
    <location>
        <position position="58"/>
    </location>
    <ligand>
        <name>[4Fe-4S] cluster</name>
        <dbReference type="ChEBI" id="CHEBI:49883"/>
        <label>1</label>
    </ligand>
</feature>
<comment type="function">
    <text evidence="2">Apoprotein for the two 4Fe-4S centers FA and FB of photosystem I (PSI); essential for photochemical activity. FB is the terminal electron acceptor of PSI, donating electrons to ferredoxin. The C-terminus interacts with PsaA/B/D and helps assemble the protein into the PSI complex. Required for binding of PsaD and PsaE to PSI. PSI is a plastocyanin/cytochrome c6-ferredoxin oxidoreductase, converting photonic excitation into a charge separation, which transfers an electron from the donor P700 chlorophyll pair to the spectroscopically characterized acceptors A0, A1, FX, FA and FB in turn.</text>
</comment>
<comment type="catalytic activity">
    <reaction evidence="2">
        <text>reduced [plastocyanin] + hnu + oxidized [2Fe-2S]-[ferredoxin] = oxidized [plastocyanin] + reduced [2Fe-2S]-[ferredoxin]</text>
        <dbReference type="Rhea" id="RHEA:30407"/>
        <dbReference type="Rhea" id="RHEA-COMP:10000"/>
        <dbReference type="Rhea" id="RHEA-COMP:10001"/>
        <dbReference type="Rhea" id="RHEA-COMP:10039"/>
        <dbReference type="Rhea" id="RHEA-COMP:10040"/>
        <dbReference type="ChEBI" id="CHEBI:29036"/>
        <dbReference type="ChEBI" id="CHEBI:30212"/>
        <dbReference type="ChEBI" id="CHEBI:33737"/>
        <dbReference type="ChEBI" id="CHEBI:33738"/>
        <dbReference type="ChEBI" id="CHEBI:49552"/>
        <dbReference type="EC" id="1.97.1.12"/>
    </reaction>
</comment>
<comment type="cofactor">
    <cofactor evidence="2">
        <name>[4Fe-4S] cluster</name>
        <dbReference type="ChEBI" id="CHEBI:49883"/>
    </cofactor>
    <text evidence="2">Binds 2 [4Fe-4S] clusters. Cluster 2 is most probably the spectroscopically characterized electron acceptor FA and cluster 1 is most probably FB.</text>
</comment>
<comment type="subunit">
    <text evidence="2">The cyanobacterial PSI reaction center is composed of one copy each of PsaA,B,C,D,E,F,I,J,K,L,M and X, and forms trimeric complexes.</text>
</comment>
<comment type="subcellular location">
    <subcellularLocation>
        <location evidence="2">Cellular thylakoid membrane</location>
        <topology evidence="2">Peripheral membrane protein</topology>
        <orientation evidence="2">Cytoplasmic side</orientation>
    </subcellularLocation>
</comment>
<accession>Q119B1</accession>
<gene>
    <name evidence="2" type="primary">psaC</name>
    <name type="ordered locus">Tery_0454</name>
</gene>
<evidence type="ECO:0000250" key="1"/>
<evidence type="ECO:0000255" key="2">
    <source>
        <dbReference type="HAMAP-Rule" id="MF_01303"/>
    </source>
</evidence>
<organism>
    <name type="scientific">Trichodesmium erythraeum (strain IMS101)</name>
    <dbReference type="NCBI Taxonomy" id="203124"/>
    <lineage>
        <taxon>Bacteria</taxon>
        <taxon>Bacillati</taxon>
        <taxon>Cyanobacteriota</taxon>
        <taxon>Cyanophyceae</taxon>
        <taxon>Oscillatoriophycideae</taxon>
        <taxon>Oscillatoriales</taxon>
        <taxon>Microcoleaceae</taxon>
        <taxon>Trichodesmium</taxon>
    </lineage>
</organism>
<proteinExistence type="inferred from homology"/>